<gene>
    <name type="primary">yjfF</name>
    <name type="ordered locus">b4231</name>
    <name type="ordered locus">JW5754</name>
</gene>
<comment type="function">
    <text evidence="3 4">Part of the ABC transporter complex YtfQRT-YjfF involved in galactofuranose transport (Probable). Probably responsible for the translocation of the substrate across the membrane (Probable).</text>
</comment>
<comment type="subunit">
    <text evidence="4">The complex is composed of two ATP-binding proteins (YtfR), two transmembrane proteins (YtfT and YjfF) and a solute-binding protein (YtfQ).</text>
</comment>
<comment type="subcellular location">
    <subcellularLocation>
        <location evidence="2">Cell inner membrane</location>
        <topology evidence="1">Multi-pass membrane protein</topology>
    </subcellularLocation>
</comment>
<comment type="similarity">
    <text evidence="3">Belongs to the binding-protein-dependent transport system permease family. AraH/RbsC subfamily.</text>
</comment>
<comment type="sequence caution" evidence="3">
    <conflict type="erroneous initiation">
        <sequence resource="EMBL-CDS" id="AAA97128"/>
    </conflict>
    <text>Truncated N-terminus.</text>
</comment>
<proteinExistence type="evidence at protein level"/>
<name>YJFF_ECOLI</name>
<organism>
    <name type="scientific">Escherichia coli (strain K12)</name>
    <dbReference type="NCBI Taxonomy" id="83333"/>
    <lineage>
        <taxon>Bacteria</taxon>
        <taxon>Pseudomonadati</taxon>
        <taxon>Pseudomonadota</taxon>
        <taxon>Gammaproteobacteria</taxon>
        <taxon>Enterobacterales</taxon>
        <taxon>Enterobacteriaceae</taxon>
        <taxon>Escherichia</taxon>
    </lineage>
</organism>
<evidence type="ECO:0000255" key="1"/>
<evidence type="ECO:0000269" key="2">
    <source>
    </source>
</evidence>
<evidence type="ECO:0000305" key="3"/>
<evidence type="ECO:0000305" key="4">
    <source>
    </source>
</evidence>
<reference key="1">
    <citation type="journal article" date="1995" name="Nucleic Acids Res.">
        <title>Analysis of the Escherichia coli genome VI: DNA sequence of the region from 92.8 through 100 minutes.</title>
        <authorList>
            <person name="Burland V.D."/>
            <person name="Plunkett G. III"/>
            <person name="Sofia H.J."/>
            <person name="Daniels D.L."/>
            <person name="Blattner F.R."/>
        </authorList>
    </citation>
    <scope>NUCLEOTIDE SEQUENCE [LARGE SCALE GENOMIC DNA]</scope>
    <source>
        <strain>K12 / MG1655 / ATCC 47076</strain>
    </source>
</reference>
<reference key="2">
    <citation type="journal article" date="1997" name="Science">
        <title>The complete genome sequence of Escherichia coli K-12.</title>
        <authorList>
            <person name="Blattner F.R."/>
            <person name="Plunkett G. III"/>
            <person name="Bloch C.A."/>
            <person name="Perna N.T."/>
            <person name="Burland V."/>
            <person name="Riley M."/>
            <person name="Collado-Vides J."/>
            <person name="Glasner J.D."/>
            <person name="Rode C.K."/>
            <person name="Mayhew G.F."/>
            <person name="Gregor J."/>
            <person name="Davis N.W."/>
            <person name="Kirkpatrick H.A."/>
            <person name="Goeden M.A."/>
            <person name="Rose D.J."/>
            <person name="Mau B."/>
            <person name="Shao Y."/>
        </authorList>
    </citation>
    <scope>NUCLEOTIDE SEQUENCE [LARGE SCALE GENOMIC DNA]</scope>
    <source>
        <strain>K12 / MG1655 / ATCC 47076</strain>
    </source>
</reference>
<reference key="3">
    <citation type="journal article" date="2006" name="Mol. Syst. Biol.">
        <title>Highly accurate genome sequences of Escherichia coli K-12 strains MG1655 and W3110.</title>
        <authorList>
            <person name="Hayashi K."/>
            <person name="Morooka N."/>
            <person name="Yamamoto Y."/>
            <person name="Fujita K."/>
            <person name="Isono K."/>
            <person name="Choi S."/>
            <person name="Ohtsubo E."/>
            <person name="Baba T."/>
            <person name="Wanner B.L."/>
            <person name="Mori H."/>
            <person name="Horiuchi T."/>
        </authorList>
    </citation>
    <scope>NUCLEOTIDE SEQUENCE [LARGE SCALE GENOMIC DNA]</scope>
    <source>
        <strain>K12 / W3110 / ATCC 27325 / DSM 5911</strain>
    </source>
</reference>
<reference key="4">
    <citation type="journal article" date="1988" name="Nucleic Acids Res.">
        <title>Sequence of the Escherichia coli fructose-1,6-bisphosphatase gene.</title>
        <authorList>
            <person name="Hamilton W.D.O."/>
            <person name="Harrison D.A."/>
            <person name="Dyer T.A."/>
        </authorList>
    </citation>
    <scope>NUCLEOTIDE SEQUENCE [GENOMIC DNA] OF 257-331</scope>
</reference>
<reference key="5">
    <citation type="journal article" date="1994" name="Nucleic Acids Res.">
        <title>Intrinsic and extrinsic approaches for detecting genes in a bacterial genome.</title>
        <authorList>
            <person name="Borodovsky M."/>
            <person name="Rudd K.E."/>
            <person name="Koonin E.V."/>
        </authorList>
    </citation>
    <scope>IDENTIFICATION</scope>
</reference>
<reference key="6">
    <citation type="journal article" date="2005" name="Science">
        <title>Global topology analysis of the Escherichia coli inner membrane proteome.</title>
        <authorList>
            <person name="Daley D.O."/>
            <person name="Rapp M."/>
            <person name="Granseth E."/>
            <person name="Melen K."/>
            <person name="Drew D."/>
            <person name="von Heijne G."/>
        </authorList>
    </citation>
    <scope>SUBCELLULAR LOCATION</scope>
    <scope>TOPOLOGY [LARGE SCALE ANALYSIS]</scope>
    <source>
        <strain>K12 / MG1655 / ATCC 47076</strain>
    </source>
</reference>
<reference key="7">
    <citation type="journal article" date="2009" name="J. Biol. Chem.">
        <title>Furanose-specific sugar transport: characterization of a bacterial galactofuranose-binding protein.</title>
        <authorList>
            <person name="Horler R.S."/>
            <person name="Muller A."/>
            <person name="Williamson D.C."/>
            <person name="Potts J.R."/>
            <person name="Wilson K.S."/>
            <person name="Thomas G.H."/>
        </authorList>
    </citation>
    <scope>FUNCTION</scope>
    <scope>SUBUNIT</scope>
    <source>
        <strain>K12</strain>
    </source>
</reference>
<dbReference type="EMBL" id="U14003">
    <property type="protein sequence ID" value="AAA97128.1"/>
    <property type="status" value="ALT_INIT"/>
    <property type="molecule type" value="Genomic_DNA"/>
</dbReference>
<dbReference type="EMBL" id="U00096">
    <property type="protein sequence ID" value="AAC77188.2"/>
    <property type="molecule type" value="Genomic_DNA"/>
</dbReference>
<dbReference type="EMBL" id="AP009048">
    <property type="protein sequence ID" value="BAE78231.1"/>
    <property type="molecule type" value="Genomic_DNA"/>
</dbReference>
<dbReference type="EMBL" id="X12545">
    <property type="status" value="NOT_ANNOTATED_CDS"/>
    <property type="molecule type" value="mRNA"/>
</dbReference>
<dbReference type="PIR" id="S56457">
    <property type="entry name" value="S56457"/>
</dbReference>
<dbReference type="RefSeq" id="NP_418652.2">
    <property type="nucleotide sequence ID" value="NC_000913.3"/>
</dbReference>
<dbReference type="RefSeq" id="WP_000596014.1">
    <property type="nucleotide sequence ID" value="NZ_LN832404.1"/>
</dbReference>
<dbReference type="BioGRID" id="4259315">
    <property type="interactions" value="24"/>
</dbReference>
<dbReference type="ComplexPortal" id="CPX-4323">
    <property type="entry name" value="Galactofuranose ABC transporter complex"/>
</dbReference>
<dbReference type="FunCoup" id="P37772">
    <property type="interactions" value="316"/>
</dbReference>
<dbReference type="STRING" id="511145.b4231"/>
<dbReference type="TCDB" id="3.A.1.2.25">
    <property type="family name" value="the atp-binding cassette (abc) superfamily"/>
</dbReference>
<dbReference type="PaxDb" id="511145-b4231"/>
<dbReference type="EnsemblBacteria" id="AAC77188">
    <property type="protein sequence ID" value="AAC77188"/>
    <property type="gene ID" value="b4231"/>
</dbReference>
<dbReference type="GeneID" id="93777594"/>
<dbReference type="GeneID" id="948754"/>
<dbReference type="KEGG" id="ecj:JW5754"/>
<dbReference type="KEGG" id="eco:b4231"/>
<dbReference type="KEGG" id="ecoc:C3026_22840"/>
<dbReference type="PATRIC" id="fig|1411691.4.peg.2471"/>
<dbReference type="EchoBASE" id="EB2334"/>
<dbReference type="eggNOG" id="COG1172">
    <property type="taxonomic scope" value="Bacteria"/>
</dbReference>
<dbReference type="HOGENOM" id="CLU_028880_3_3_6"/>
<dbReference type="InParanoid" id="P37772"/>
<dbReference type="OMA" id="IGFWGIS"/>
<dbReference type="OrthoDB" id="5422926at2"/>
<dbReference type="PhylomeDB" id="P37772"/>
<dbReference type="BioCyc" id="EcoCyc:YJFF-MONOMER"/>
<dbReference type="BioCyc" id="MetaCyc:YJFF-MONOMER"/>
<dbReference type="PRO" id="PR:P37772"/>
<dbReference type="Proteomes" id="UP000000625">
    <property type="component" value="Chromosome"/>
</dbReference>
<dbReference type="GO" id="GO:0055052">
    <property type="term" value="C:ATP-binding cassette (ABC) transporter complex, substrate-binding subunit-containing"/>
    <property type="evidence" value="ECO:0000303"/>
    <property type="project" value="ComplexPortal"/>
</dbReference>
<dbReference type="GO" id="GO:0005886">
    <property type="term" value="C:plasma membrane"/>
    <property type="evidence" value="ECO:0000314"/>
    <property type="project" value="EcoCyc"/>
</dbReference>
<dbReference type="GO" id="GO:0022857">
    <property type="term" value="F:transmembrane transporter activity"/>
    <property type="evidence" value="ECO:0007669"/>
    <property type="project" value="InterPro"/>
</dbReference>
<dbReference type="GO" id="GO:0140271">
    <property type="term" value="P:hexose import across plasma membrane"/>
    <property type="evidence" value="ECO:0000303"/>
    <property type="project" value="ComplexPortal"/>
</dbReference>
<dbReference type="CDD" id="cd06579">
    <property type="entry name" value="TM_PBP1_transp_AraH_like"/>
    <property type="match status" value="1"/>
</dbReference>
<dbReference type="InterPro" id="IPR001851">
    <property type="entry name" value="ABC_transp_permease"/>
</dbReference>
<dbReference type="NCBIfam" id="NF008630">
    <property type="entry name" value="PRK11618.1"/>
    <property type="match status" value="1"/>
</dbReference>
<dbReference type="PANTHER" id="PTHR32196">
    <property type="entry name" value="ABC TRANSPORTER PERMEASE PROTEIN YPHD-RELATED-RELATED"/>
    <property type="match status" value="1"/>
</dbReference>
<dbReference type="PANTHER" id="PTHR32196:SF63">
    <property type="entry name" value="INNER MEMBRANE ABC TRANSPORTER PERMEASE PROTEIN YJFF"/>
    <property type="match status" value="1"/>
</dbReference>
<dbReference type="Pfam" id="PF02653">
    <property type="entry name" value="BPD_transp_2"/>
    <property type="match status" value="1"/>
</dbReference>
<protein>
    <recommendedName>
        <fullName>Inner membrane ABC transporter permease protein YjfF</fullName>
    </recommendedName>
</protein>
<keyword id="KW-0997">Cell inner membrane</keyword>
<keyword id="KW-1003">Cell membrane</keyword>
<keyword id="KW-0472">Membrane</keyword>
<keyword id="KW-1185">Reference proteome</keyword>
<keyword id="KW-0762">Sugar transport</keyword>
<keyword id="KW-0812">Transmembrane</keyword>
<keyword id="KW-1133">Transmembrane helix</keyword>
<keyword id="KW-0813">Transport</keyword>
<feature type="chain" id="PRO_0000060260" description="Inner membrane ABC transporter permease protein YjfF">
    <location>
        <begin position="1"/>
        <end position="331"/>
    </location>
</feature>
<feature type="topological domain" description="Cytoplasmic" evidence="3">
    <location>
        <begin position="1"/>
        <end position="5"/>
    </location>
</feature>
<feature type="transmembrane region" description="Helical" evidence="1">
    <location>
        <begin position="6"/>
        <end position="26"/>
    </location>
</feature>
<feature type="topological domain" description="Periplasmic" evidence="3">
    <location>
        <begin position="27"/>
        <end position="42"/>
    </location>
</feature>
<feature type="transmembrane region" description="Helical" evidence="1">
    <location>
        <begin position="43"/>
        <end position="63"/>
    </location>
</feature>
<feature type="topological domain" description="Cytoplasmic" evidence="3">
    <location>
        <begin position="64"/>
        <end position="88"/>
    </location>
</feature>
<feature type="transmembrane region" description="Helical" evidence="1">
    <location>
        <begin position="89"/>
        <end position="109"/>
    </location>
</feature>
<feature type="topological domain" description="Periplasmic" evidence="3">
    <location>
        <begin position="110"/>
        <end position="113"/>
    </location>
</feature>
<feature type="transmembrane region" description="Helical" evidence="1">
    <location>
        <begin position="114"/>
        <end position="134"/>
    </location>
</feature>
<feature type="topological domain" description="Cytoplasmic" evidence="3">
    <location>
        <begin position="135"/>
        <end position="159"/>
    </location>
</feature>
<feature type="transmembrane region" description="Helical" evidence="1">
    <location>
        <begin position="160"/>
        <end position="180"/>
    </location>
</feature>
<feature type="topological domain" description="Periplasmic" evidence="3">
    <location>
        <begin position="181"/>
        <end position="222"/>
    </location>
</feature>
<feature type="transmembrane region" description="Helical" evidence="1">
    <location>
        <begin position="223"/>
        <end position="243"/>
    </location>
</feature>
<feature type="topological domain" description="Cytoplasmic" evidence="3">
    <location>
        <begin position="244"/>
        <end position="250"/>
    </location>
</feature>
<feature type="transmembrane region" description="Helical" evidence="1">
    <location>
        <begin position="251"/>
        <end position="271"/>
    </location>
</feature>
<feature type="topological domain" description="Periplasmic" evidence="3">
    <location>
        <begin position="272"/>
        <end position="294"/>
    </location>
</feature>
<feature type="transmembrane region" description="Helical" evidence="1">
    <location>
        <begin position="295"/>
        <end position="315"/>
    </location>
</feature>
<feature type="topological domain" description="Cytoplasmic" evidence="2">
    <location>
        <begin position="316"/>
        <end position="331"/>
    </location>
</feature>
<feature type="sequence conflict" description="In Ref. 4; X12545." evidence="3" ref="4">
    <original>L</original>
    <variation>V</variation>
    <location>
        <position position="257"/>
    </location>
</feature>
<sequence length="331" mass="34978">MIKRNLPLMITIGVFVLGYLYCLTQFPGFASTRVICNILTDNAFLGIIAVGMTFVILSGGIDLSVGSVIAFTGVFLAKVIGDFGLSPLLAFPLVLVMGCAFGAFMGLLIDALKIPAFIITLAGMFFLRGVSYLVSEESIPINHPIYDTLSSLAWKIPGGGRLSAMGLLMLAVVVIGIFLAHRTRFGNQVYAIGGNATSANLMGISTRSTTIRIYMLSTGLATLAGIVFSIYTQAGYALAGVGVELDAIASVVIGGTLLSGGVGTVLGTLFGVAIQGLIQTYINFDGTLSSWWTKIAIGILLFIFIALQRGLTVLWENRQSSPVTRVNIAQQ</sequence>
<accession>P37772</accession>
<accession>Q2M675</accession>